<proteinExistence type="inferred from homology"/>
<accession>Q57GJ0</accession>
<gene>
    <name evidence="1" type="primary">priB</name>
    <name type="ordered locus">SCH_4266</name>
</gene>
<protein>
    <recommendedName>
        <fullName evidence="1">Replication restart protein PriB</fullName>
    </recommendedName>
</protein>
<comment type="function">
    <text evidence="1">Involved in the restart of stalled replication forks, which reloads the replicative helicase on sites other than the origin of replication; the PriA-PriB pathway is the major replication restart pathway. During primosome assembly it facilitates complex formation between PriA and DnaT on DNA; stabilizes PriA on DNA. Stimulates the DNA unwinding activity of PriA helicase.</text>
</comment>
<comment type="subunit">
    <text evidence="1">Homodimer. Interacts with PriA and DnaT. Component of the replication restart primosome. Primosome assembly occurs via a 'hand-off' mechanism. PriA binds to replication forks, subsequently PriB then DnaT bind; DnaT then displaces ssDNA to generate the helicase loading substrate.</text>
</comment>
<comment type="similarity">
    <text evidence="1">Belongs to the PriB family.</text>
</comment>
<keyword id="KW-0235">DNA replication</keyword>
<keyword id="KW-0238">DNA-binding</keyword>
<keyword id="KW-0639">Primosome</keyword>
<sequence length="104" mass="11414">MTNRLALSGTVCRAPLRKVSPSGIPHCQFVLEHRSVQEEAGFHRQAWCQMPVIVSGHENQAITHSITVGSRITVQGFISCHKAKNGLSKMVLHAEQIELIDSGD</sequence>
<feature type="chain" id="PRO_1000083288" description="Replication restart protein PriB">
    <location>
        <begin position="1"/>
        <end position="104"/>
    </location>
</feature>
<feature type="domain" description="SSB" evidence="1">
    <location>
        <begin position="1"/>
        <end position="101"/>
    </location>
</feature>
<dbReference type="EMBL" id="AE017220">
    <property type="protein sequence ID" value="AAX68172.1"/>
    <property type="molecule type" value="Genomic_DNA"/>
</dbReference>
<dbReference type="RefSeq" id="WP_001519453.1">
    <property type="nucleotide sequence ID" value="NC_006905.1"/>
</dbReference>
<dbReference type="SMR" id="Q57GJ0"/>
<dbReference type="GeneID" id="66758616"/>
<dbReference type="KEGG" id="sec:SCH_4266"/>
<dbReference type="HOGENOM" id="CLU_166075_0_0_6"/>
<dbReference type="Proteomes" id="UP000000538">
    <property type="component" value="Chromosome"/>
</dbReference>
<dbReference type="GO" id="GO:1990077">
    <property type="term" value="C:primosome complex"/>
    <property type="evidence" value="ECO:0007669"/>
    <property type="project" value="UniProtKB-KW"/>
</dbReference>
<dbReference type="GO" id="GO:0003697">
    <property type="term" value="F:single-stranded DNA binding"/>
    <property type="evidence" value="ECO:0007669"/>
    <property type="project" value="UniProtKB-UniRule"/>
</dbReference>
<dbReference type="GO" id="GO:0006269">
    <property type="term" value="P:DNA replication, synthesis of primer"/>
    <property type="evidence" value="ECO:0007669"/>
    <property type="project" value="UniProtKB-KW"/>
</dbReference>
<dbReference type="CDD" id="cd04496">
    <property type="entry name" value="SSB_OBF"/>
    <property type="match status" value="1"/>
</dbReference>
<dbReference type="FunFam" id="2.40.50.140:FF:000077">
    <property type="entry name" value="Primosomal replication protein N"/>
    <property type="match status" value="1"/>
</dbReference>
<dbReference type="Gene3D" id="2.40.50.140">
    <property type="entry name" value="Nucleic acid-binding proteins"/>
    <property type="match status" value="1"/>
</dbReference>
<dbReference type="HAMAP" id="MF_00720">
    <property type="entry name" value="PriB"/>
    <property type="match status" value="1"/>
</dbReference>
<dbReference type="InterPro" id="IPR012340">
    <property type="entry name" value="NA-bd_OB-fold"/>
</dbReference>
<dbReference type="InterPro" id="IPR000424">
    <property type="entry name" value="Primosome_PriB/ssb"/>
</dbReference>
<dbReference type="InterPro" id="IPR023646">
    <property type="entry name" value="Prisomal_replication_PriB"/>
</dbReference>
<dbReference type="NCBIfam" id="TIGR04418">
    <property type="entry name" value="PriB_gamma"/>
    <property type="match status" value="1"/>
</dbReference>
<dbReference type="Pfam" id="PF22657">
    <property type="entry name" value="SSB_1"/>
    <property type="match status" value="1"/>
</dbReference>
<dbReference type="PIRSF" id="PIRSF003135">
    <property type="entry name" value="Primosomal_n"/>
    <property type="match status" value="1"/>
</dbReference>
<dbReference type="SUPFAM" id="SSF50249">
    <property type="entry name" value="Nucleic acid-binding proteins"/>
    <property type="match status" value="1"/>
</dbReference>
<dbReference type="PROSITE" id="PS50935">
    <property type="entry name" value="SSB"/>
    <property type="match status" value="1"/>
</dbReference>
<evidence type="ECO:0000255" key="1">
    <source>
        <dbReference type="HAMAP-Rule" id="MF_00720"/>
    </source>
</evidence>
<name>PRIB_SALCH</name>
<reference key="1">
    <citation type="journal article" date="2005" name="Nucleic Acids Res.">
        <title>The genome sequence of Salmonella enterica serovar Choleraesuis, a highly invasive and resistant zoonotic pathogen.</title>
        <authorList>
            <person name="Chiu C.-H."/>
            <person name="Tang P."/>
            <person name="Chu C."/>
            <person name="Hu S."/>
            <person name="Bao Q."/>
            <person name="Yu J."/>
            <person name="Chou Y.-Y."/>
            <person name="Wang H.-S."/>
            <person name="Lee Y.-S."/>
        </authorList>
    </citation>
    <scope>NUCLEOTIDE SEQUENCE [LARGE SCALE GENOMIC DNA]</scope>
    <source>
        <strain>SC-B67</strain>
    </source>
</reference>
<organism>
    <name type="scientific">Salmonella choleraesuis (strain SC-B67)</name>
    <dbReference type="NCBI Taxonomy" id="321314"/>
    <lineage>
        <taxon>Bacteria</taxon>
        <taxon>Pseudomonadati</taxon>
        <taxon>Pseudomonadota</taxon>
        <taxon>Gammaproteobacteria</taxon>
        <taxon>Enterobacterales</taxon>
        <taxon>Enterobacteriaceae</taxon>
        <taxon>Salmonella</taxon>
    </lineage>
</organism>